<feature type="chain" id="PRO_0000329357" description="Adenine phosphoribosyltransferase">
    <location>
        <begin position="1"/>
        <end position="179"/>
    </location>
</feature>
<gene>
    <name evidence="1" type="primary">apt</name>
    <name type="ordered locus">Mflv_3813</name>
</gene>
<reference key="1">
    <citation type="submission" date="2007-04" db="EMBL/GenBank/DDBJ databases">
        <title>Complete sequence of chromosome of Mycobacterium gilvum PYR-GCK.</title>
        <authorList>
            <consortium name="US DOE Joint Genome Institute"/>
            <person name="Copeland A."/>
            <person name="Lucas S."/>
            <person name="Lapidus A."/>
            <person name="Barry K."/>
            <person name="Detter J.C."/>
            <person name="Glavina del Rio T."/>
            <person name="Hammon N."/>
            <person name="Israni S."/>
            <person name="Dalin E."/>
            <person name="Tice H."/>
            <person name="Pitluck S."/>
            <person name="Chain P."/>
            <person name="Malfatti S."/>
            <person name="Shin M."/>
            <person name="Vergez L."/>
            <person name="Schmutz J."/>
            <person name="Larimer F."/>
            <person name="Land M."/>
            <person name="Hauser L."/>
            <person name="Kyrpides N."/>
            <person name="Mikhailova N."/>
            <person name="Miller C."/>
            <person name="Richardson P."/>
        </authorList>
    </citation>
    <scope>NUCLEOTIDE SEQUENCE [LARGE SCALE GENOMIC DNA]</scope>
    <source>
        <strain>PYR-GCK</strain>
    </source>
</reference>
<comment type="function">
    <text evidence="1">Catalyzes a salvage reaction resulting in the formation of AMP, that is energically less costly than de novo synthesis.</text>
</comment>
<comment type="catalytic activity">
    <reaction evidence="1">
        <text>AMP + diphosphate = 5-phospho-alpha-D-ribose 1-diphosphate + adenine</text>
        <dbReference type="Rhea" id="RHEA:16609"/>
        <dbReference type="ChEBI" id="CHEBI:16708"/>
        <dbReference type="ChEBI" id="CHEBI:33019"/>
        <dbReference type="ChEBI" id="CHEBI:58017"/>
        <dbReference type="ChEBI" id="CHEBI:456215"/>
        <dbReference type="EC" id="2.4.2.7"/>
    </reaction>
</comment>
<comment type="pathway">
    <text evidence="1">Purine metabolism; AMP biosynthesis via salvage pathway; AMP from adenine: step 1/1.</text>
</comment>
<comment type="subunit">
    <text evidence="1">Homodimer.</text>
</comment>
<comment type="subcellular location">
    <subcellularLocation>
        <location evidence="1">Cytoplasm</location>
    </subcellularLocation>
</comment>
<comment type="similarity">
    <text evidence="1">Belongs to the purine/pyrimidine phosphoribosyltransferase family.</text>
</comment>
<protein>
    <recommendedName>
        <fullName evidence="1">Adenine phosphoribosyltransferase</fullName>
        <shortName evidence="1">APRT</shortName>
        <ecNumber evidence="1">2.4.2.7</ecNumber>
    </recommendedName>
</protein>
<dbReference type="EC" id="2.4.2.7" evidence="1"/>
<dbReference type="EMBL" id="CP000656">
    <property type="protein sequence ID" value="ABP46285.1"/>
    <property type="molecule type" value="Genomic_DNA"/>
</dbReference>
<dbReference type="SMR" id="A4TBR2"/>
<dbReference type="STRING" id="350054.Mflv_3813"/>
<dbReference type="KEGG" id="mgi:Mflv_3813"/>
<dbReference type="eggNOG" id="COG0503">
    <property type="taxonomic scope" value="Bacteria"/>
</dbReference>
<dbReference type="HOGENOM" id="CLU_063339_3_3_11"/>
<dbReference type="OrthoDB" id="9803963at2"/>
<dbReference type="UniPathway" id="UPA00588">
    <property type="reaction ID" value="UER00646"/>
</dbReference>
<dbReference type="GO" id="GO:0005737">
    <property type="term" value="C:cytoplasm"/>
    <property type="evidence" value="ECO:0007669"/>
    <property type="project" value="UniProtKB-SubCell"/>
</dbReference>
<dbReference type="GO" id="GO:0002055">
    <property type="term" value="F:adenine binding"/>
    <property type="evidence" value="ECO:0007669"/>
    <property type="project" value="TreeGrafter"/>
</dbReference>
<dbReference type="GO" id="GO:0003999">
    <property type="term" value="F:adenine phosphoribosyltransferase activity"/>
    <property type="evidence" value="ECO:0007669"/>
    <property type="project" value="UniProtKB-UniRule"/>
</dbReference>
<dbReference type="GO" id="GO:0016208">
    <property type="term" value="F:AMP binding"/>
    <property type="evidence" value="ECO:0007669"/>
    <property type="project" value="TreeGrafter"/>
</dbReference>
<dbReference type="GO" id="GO:0006168">
    <property type="term" value="P:adenine salvage"/>
    <property type="evidence" value="ECO:0007669"/>
    <property type="project" value="InterPro"/>
</dbReference>
<dbReference type="GO" id="GO:0044209">
    <property type="term" value="P:AMP salvage"/>
    <property type="evidence" value="ECO:0007669"/>
    <property type="project" value="UniProtKB-UniRule"/>
</dbReference>
<dbReference type="GO" id="GO:0006166">
    <property type="term" value="P:purine ribonucleoside salvage"/>
    <property type="evidence" value="ECO:0007669"/>
    <property type="project" value="UniProtKB-KW"/>
</dbReference>
<dbReference type="CDD" id="cd06223">
    <property type="entry name" value="PRTases_typeI"/>
    <property type="match status" value="1"/>
</dbReference>
<dbReference type="FunFam" id="3.40.50.2020:FF:000021">
    <property type="entry name" value="Adenine phosphoribosyltransferase"/>
    <property type="match status" value="1"/>
</dbReference>
<dbReference type="Gene3D" id="3.40.50.2020">
    <property type="match status" value="1"/>
</dbReference>
<dbReference type="HAMAP" id="MF_00004">
    <property type="entry name" value="Aden_phosphoribosyltr"/>
    <property type="match status" value="1"/>
</dbReference>
<dbReference type="InterPro" id="IPR005764">
    <property type="entry name" value="Ade_phspho_trans"/>
</dbReference>
<dbReference type="InterPro" id="IPR000836">
    <property type="entry name" value="PRibTrfase_dom"/>
</dbReference>
<dbReference type="InterPro" id="IPR029057">
    <property type="entry name" value="PRTase-like"/>
</dbReference>
<dbReference type="InterPro" id="IPR050054">
    <property type="entry name" value="UPRTase/APRTase"/>
</dbReference>
<dbReference type="NCBIfam" id="NF002636">
    <property type="entry name" value="PRK02304.1-5"/>
    <property type="match status" value="1"/>
</dbReference>
<dbReference type="PANTHER" id="PTHR32315">
    <property type="entry name" value="ADENINE PHOSPHORIBOSYLTRANSFERASE"/>
    <property type="match status" value="1"/>
</dbReference>
<dbReference type="PANTHER" id="PTHR32315:SF3">
    <property type="entry name" value="ADENINE PHOSPHORIBOSYLTRANSFERASE"/>
    <property type="match status" value="1"/>
</dbReference>
<dbReference type="Pfam" id="PF00156">
    <property type="entry name" value="Pribosyltran"/>
    <property type="match status" value="1"/>
</dbReference>
<dbReference type="SUPFAM" id="SSF53271">
    <property type="entry name" value="PRTase-like"/>
    <property type="match status" value="1"/>
</dbReference>
<dbReference type="PROSITE" id="PS00103">
    <property type="entry name" value="PUR_PYR_PR_TRANSFER"/>
    <property type="match status" value="1"/>
</dbReference>
<evidence type="ECO:0000255" key="1">
    <source>
        <dbReference type="HAMAP-Rule" id="MF_00004"/>
    </source>
</evidence>
<proteinExistence type="inferred from homology"/>
<organism>
    <name type="scientific">Mycolicibacterium gilvum (strain PYR-GCK)</name>
    <name type="common">Mycobacterium gilvum (strain PYR-GCK)</name>
    <dbReference type="NCBI Taxonomy" id="350054"/>
    <lineage>
        <taxon>Bacteria</taxon>
        <taxon>Bacillati</taxon>
        <taxon>Actinomycetota</taxon>
        <taxon>Actinomycetes</taxon>
        <taxon>Mycobacteriales</taxon>
        <taxon>Mycobacteriaceae</taxon>
        <taxon>Mycolicibacterium</taxon>
    </lineage>
</organism>
<sequence>MSGEPGTDIAEVIRSLMREVPDFPEPGVHFKDLTPVLADAYGLAEVSRAIADSARGADLVAGVDARGFLLGGAVAVTLGIGVLAVRKGGKLPPPVLGETYTLEYGSATLEVPADGVELAGRSVVVIDDVLATGGTLAAAHQLLTKAGANVTGAVVMMELTALGGRAAVDPLEVTSLYSV</sequence>
<keyword id="KW-0963">Cytoplasm</keyword>
<keyword id="KW-0328">Glycosyltransferase</keyword>
<keyword id="KW-0660">Purine salvage</keyword>
<keyword id="KW-0808">Transferase</keyword>
<name>APT_MYCGI</name>
<accession>A4TBR2</accession>